<comment type="function">
    <text evidence="1">Required for rescue of stalled ribosomes mediated by trans-translation. Binds to transfer-messenger RNA (tmRNA), required for stable association of tmRNA with ribosomes. tmRNA and SmpB together mimic tRNA shape, replacing the anticodon stem-loop with SmpB. tmRNA is encoded by the ssrA gene; the 2 termini fold to resemble tRNA(Ala) and it encodes a 'tag peptide', a short internal open reading frame. During trans-translation Ala-aminoacylated tmRNA acts like a tRNA, entering the A-site of stalled ribosomes, displacing the stalled mRNA. The ribosome then switches to translate the ORF on the tmRNA; the nascent peptide is terminated with the 'tag peptide' encoded by the tmRNA and targeted for degradation. The ribosome is freed to recommence translation, which seems to be the essential function of trans-translation.</text>
</comment>
<comment type="subcellular location">
    <subcellularLocation>
        <location evidence="1">Cytoplasm</location>
    </subcellularLocation>
    <text evidence="1">The tmRNA-SmpB complex associates with stalled 70S ribosomes.</text>
</comment>
<comment type="similarity">
    <text evidence="1">Belongs to the SmpB family.</text>
</comment>
<accession>Q66DB4</accession>
<proteinExistence type="inferred from homology"/>
<organism>
    <name type="scientific">Yersinia pseudotuberculosis serotype I (strain IP32953)</name>
    <dbReference type="NCBI Taxonomy" id="273123"/>
    <lineage>
        <taxon>Bacteria</taxon>
        <taxon>Pseudomonadati</taxon>
        <taxon>Pseudomonadota</taxon>
        <taxon>Gammaproteobacteria</taxon>
        <taxon>Enterobacterales</taxon>
        <taxon>Yersiniaceae</taxon>
        <taxon>Yersinia</taxon>
    </lineage>
</organism>
<protein>
    <recommendedName>
        <fullName evidence="1">SsrA-binding protein</fullName>
    </recommendedName>
    <alternativeName>
        <fullName evidence="1">Small protein B</fullName>
    </alternativeName>
</protein>
<evidence type="ECO:0000255" key="1">
    <source>
        <dbReference type="HAMAP-Rule" id="MF_00023"/>
    </source>
</evidence>
<reference key="1">
    <citation type="journal article" date="2004" name="Proc. Natl. Acad. Sci. U.S.A.">
        <title>Insights into the evolution of Yersinia pestis through whole-genome comparison with Yersinia pseudotuberculosis.</title>
        <authorList>
            <person name="Chain P.S.G."/>
            <person name="Carniel E."/>
            <person name="Larimer F.W."/>
            <person name="Lamerdin J."/>
            <person name="Stoutland P.O."/>
            <person name="Regala W.M."/>
            <person name="Georgescu A.M."/>
            <person name="Vergez L.M."/>
            <person name="Land M.L."/>
            <person name="Motin V.L."/>
            <person name="Brubaker R.R."/>
            <person name="Fowler J."/>
            <person name="Hinnebusch J."/>
            <person name="Marceau M."/>
            <person name="Medigue C."/>
            <person name="Simonet M."/>
            <person name="Chenal-Francisque V."/>
            <person name="Souza B."/>
            <person name="Dacheux D."/>
            <person name="Elliott J.M."/>
            <person name="Derbise A."/>
            <person name="Hauser L.J."/>
            <person name="Garcia E."/>
        </authorList>
    </citation>
    <scope>NUCLEOTIDE SEQUENCE [LARGE SCALE GENOMIC DNA]</scope>
    <source>
        <strain>IP32953</strain>
    </source>
</reference>
<dbReference type="EMBL" id="BX936398">
    <property type="protein sequence ID" value="CAH20375.1"/>
    <property type="molecule type" value="Genomic_DNA"/>
</dbReference>
<dbReference type="RefSeq" id="WP_002210714.1">
    <property type="nucleotide sequence ID" value="NZ_CP009712.1"/>
</dbReference>
<dbReference type="SMR" id="Q66DB4"/>
<dbReference type="GeneID" id="57977237"/>
<dbReference type="KEGG" id="ypo:BZ17_1402"/>
<dbReference type="KEGG" id="yps:YPTB1135"/>
<dbReference type="PATRIC" id="fig|273123.14.peg.1487"/>
<dbReference type="Proteomes" id="UP000001011">
    <property type="component" value="Chromosome"/>
</dbReference>
<dbReference type="GO" id="GO:0005829">
    <property type="term" value="C:cytosol"/>
    <property type="evidence" value="ECO:0007669"/>
    <property type="project" value="TreeGrafter"/>
</dbReference>
<dbReference type="GO" id="GO:0003723">
    <property type="term" value="F:RNA binding"/>
    <property type="evidence" value="ECO:0007669"/>
    <property type="project" value="UniProtKB-UniRule"/>
</dbReference>
<dbReference type="GO" id="GO:0070929">
    <property type="term" value="P:trans-translation"/>
    <property type="evidence" value="ECO:0007669"/>
    <property type="project" value="UniProtKB-UniRule"/>
</dbReference>
<dbReference type="CDD" id="cd09294">
    <property type="entry name" value="SmpB"/>
    <property type="match status" value="1"/>
</dbReference>
<dbReference type="Gene3D" id="2.40.280.10">
    <property type="match status" value="1"/>
</dbReference>
<dbReference type="HAMAP" id="MF_00023">
    <property type="entry name" value="SmpB"/>
    <property type="match status" value="1"/>
</dbReference>
<dbReference type="InterPro" id="IPR023620">
    <property type="entry name" value="SmpB"/>
</dbReference>
<dbReference type="InterPro" id="IPR000037">
    <property type="entry name" value="SsrA-bd_prot"/>
</dbReference>
<dbReference type="InterPro" id="IPR020081">
    <property type="entry name" value="SsrA-bd_prot_CS"/>
</dbReference>
<dbReference type="NCBIfam" id="NF003843">
    <property type="entry name" value="PRK05422.1"/>
    <property type="match status" value="1"/>
</dbReference>
<dbReference type="NCBIfam" id="TIGR00086">
    <property type="entry name" value="smpB"/>
    <property type="match status" value="1"/>
</dbReference>
<dbReference type="PANTHER" id="PTHR30308:SF2">
    <property type="entry name" value="SSRA-BINDING PROTEIN"/>
    <property type="match status" value="1"/>
</dbReference>
<dbReference type="PANTHER" id="PTHR30308">
    <property type="entry name" value="TMRNA-BINDING COMPONENT OF TRANS-TRANSLATION TAGGING COMPLEX"/>
    <property type="match status" value="1"/>
</dbReference>
<dbReference type="Pfam" id="PF01668">
    <property type="entry name" value="SmpB"/>
    <property type="match status" value="1"/>
</dbReference>
<dbReference type="SUPFAM" id="SSF74982">
    <property type="entry name" value="Small protein B (SmpB)"/>
    <property type="match status" value="1"/>
</dbReference>
<dbReference type="PROSITE" id="PS01317">
    <property type="entry name" value="SSRP"/>
    <property type="match status" value="1"/>
</dbReference>
<feature type="chain" id="PRO_0000103077" description="SsrA-binding protein">
    <location>
        <begin position="1"/>
        <end position="160"/>
    </location>
</feature>
<sequence length="160" mass="18407">MTKKKAYKPGSATIAQNKRARHEYFIEEEFEAGLALQGWEVKSLRAGKANISDSYVMFKNGEAFLFGATITPLNVASTHVVCEPMRTRKLLLNKRELDSLFGRVNREGYTVVALSMYWKNAWVKVKIGVAKGKKDNDKRDDIRDREWKLDKARIMKHANR</sequence>
<name>SSRP_YERPS</name>
<keyword id="KW-0963">Cytoplasm</keyword>
<keyword id="KW-0694">RNA-binding</keyword>
<gene>
    <name evidence="1" type="primary">smpB</name>
    <name type="ordered locus">YPTB1135</name>
</gene>